<reference key="1">
    <citation type="journal article" date="2005" name="Nature">
        <title>The genome of the social amoeba Dictyostelium discoideum.</title>
        <authorList>
            <person name="Eichinger L."/>
            <person name="Pachebat J.A."/>
            <person name="Gloeckner G."/>
            <person name="Rajandream M.A."/>
            <person name="Sucgang R."/>
            <person name="Berriman M."/>
            <person name="Song J."/>
            <person name="Olsen R."/>
            <person name="Szafranski K."/>
            <person name="Xu Q."/>
            <person name="Tunggal B."/>
            <person name="Kummerfeld S."/>
            <person name="Madera M."/>
            <person name="Konfortov B.A."/>
            <person name="Rivero F."/>
            <person name="Bankier A.T."/>
            <person name="Lehmann R."/>
            <person name="Hamlin N."/>
            <person name="Davies R."/>
            <person name="Gaudet P."/>
            <person name="Fey P."/>
            <person name="Pilcher K."/>
            <person name="Chen G."/>
            <person name="Saunders D."/>
            <person name="Sodergren E.J."/>
            <person name="Davis P."/>
            <person name="Kerhornou A."/>
            <person name="Nie X."/>
            <person name="Hall N."/>
            <person name="Anjard C."/>
            <person name="Hemphill L."/>
            <person name="Bason N."/>
            <person name="Farbrother P."/>
            <person name="Desany B."/>
            <person name="Just E."/>
            <person name="Morio T."/>
            <person name="Rost R."/>
            <person name="Churcher C.M."/>
            <person name="Cooper J."/>
            <person name="Haydock S."/>
            <person name="van Driessche N."/>
            <person name="Cronin A."/>
            <person name="Goodhead I."/>
            <person name="Muzny D.M."/>
            <person name="Mourier T."/>
            <person name="Pain A."/>
            <person name="Lu M."/>
            <person name="Harper D."/>
            <person name="Lindsay R."/>
            <person name="Hauser H."/>
            <person name="James K.D."/>
            <person name="Quiles M."/>
            <person name="Madan Babu M."/>
            <person name="Saito T."/>
            <person name="Buchrieser C."/>
            <person name="Wardroper A."/>
            <person name="Felder M."/>
            <person name="Thangavelu M."/>
            <person name="Johnson D."/>
            <person name="Knights A."/>
            <person name="Loulseged H."/>
            <person name="Mungall K.L."/>
            <person name="Oliver K."/>
            <person name="Price C."/>
            <person name="Quail M.A."/>
            <person name="Urushihara H."/>
            <person name="Hernandez J."/>
            <person name="Rabbinowitsch E."/>
            <person name="Steffen D."/>
            <person name="Sanders M."/>
            <person name="Ma J."/>
            <person name="Kohara Y."/>
            <person name="Sharp S."/>
            <person name="Simmonds M.N."/>
            <person name="Spiegler S."/>
            <person name="Tivey A."/>
            <person name="Sugano S."/>
            <person name="White B."/>
            <person name="Walker D."/>
            <person name="Woodward J.R."/>
            <person name="Winckler T."/>
            <person name="Tanaka Y."/>
            <person name="Shaulsky G."/>
            <person name="Schleicher M."/>
            <person name="Weinstock G.M."/>
            <person name="Rosenthal A."/>
            <person name="Cox E.C."/>
            <person name="Chisholm R.L."/>
            <person name="Gibbs R.A."/>
            <person name="Loomis W.F."/>
            <person name="Platzer M."/>
            <person name="Kay R.R."/>
            <person name="Williams J.G."/>
            <person name="Dear P.H."/>
            <person name="Noegel A.A."/>
            <person name="Barrell B.G."/>
            <person name="Kuspa A."/>
        </authorList>
    </citation>
    <scope>NUCLEOTIDE SEQUENCE [LARGE SCALE GENOMIC DNA]</scope>
    <source>
        <strain>AX4</strain>
    </source>
</reference>
<dbReference type="EMBL" id="AAFI02000128">
    <property type="protein sequence ID" value="EAL62955.1"/>
    <property type="molecule type" value="Genomic_DNA"/>
</dbReference>
<dbReference type="RefSeq" id="XP_636458.1">
    <property type="nucleotide sequence ID" value="XM_631366.1"/>
</dbReference>
<dbReference type="SMR" id="Q54I65"/>
<dbReference type="FunCoup" id="Q54I65">
    <property type="interactions" value="161"/>
</dbReference>
<dbReference type="STRING" id="44689.Q54I65"/>
<dbReference type="PaxDb" id="44689-DDB0220490"/>
<dbReference type="EnsemblProtists" id="EAL62955">
    <property type="protein sequence ID" value="EAL62955"/>
    <property type="gene ID" value="DDB_G0288975"/>
</dbReference>
<dbReference type="GeneID" id="8626897"/>
<dbReference type="KEGG" id="ddi:DDB_G0288975"/>
<dbReference type="dictyBase" id="DDB_G0288975">
    <property type="gene designation" value="hbx13"/>
</dbReference>
<dbReference type="VEuPathDB" id="AmoebaDB:DDB_G0288975"/>
<dbReference type="eggNOG" id="ENOG502RI6F">
    <property type="taxonomic scope" value="Eukaryota"/>
</dbReference>
<dbReference type="HOGENOM" id="CLU_256873_0_0_1"/>
<dbReference type="InParanoid" id="Q54I65"/>
<dbReference type="PRO" id="PR:Q54I65"/>
<dbReference type="Proteomes" id="UP000002195">
    <property type="component" value="Chromosome 5"/>
</dbReference>
<dbReference type="GO" id="GO:0005634">
    <property type="term" value="C:nucleus"/>
    <property type="evidence" value="ECO:0007669"/>
    <property type="project" value="UniProtKB-SubCell"/>
</dbReference>
<dbReference type="GO" id="GO:0003677">
    <property type="term" value="F:DNA binding"/>
    <property type="evidence" value="ECO:0007669"/>
    <property type="project" value="UniProtKB-KW"/>
</dbReference>
<dbReference type="GO" id="GO:0004402">
    <property type="term" value="F:histone acetyltransferase activity"/>
    <property type="evidence" value="ECO:0000318"/>
    <property type="project" value="GO_Central"/>
</dbReference>
<dbReference type="CDD" id="cd00086">
    <property type="entry name" value="homeodomain"/>
    <property type="match status" value="1"/>
</dbReference>
<dbReference type="Gene3D" id="3.90.980.20">
    <property type="match status" value="1"/>
</dbReference>
<dbReference type="InterPro" id="IPR001356">
    <property type="entry name" value="HD"/>
</dbReference>
<dbReference type="InterPro" id="IPR009057">
    <property type="entry name" value="Homeodomain-like_sf"/>
</dbReference>
<dbReference type="PANTHER" id="PTHR20916:SF12">
    <property type="entry name" value="ANCESTRAL COATOMER ELEMENT 1 SEC16_SEC31 DOMAIN-CONTAINING PROTEIN-RELATED"/>
    <property type="match status" value="1"/>
</dbReference>
<dbReference type="PANTHER" id="PTHR20916">
    <property type="entry name" value="CYSTEINE AND GLYCINE-RICH PROTEIN 2 BINDING PROTEIN"/>
    <property type="match status" value="1"/>
</dbReference>
<dbReference type="SMART" id="SM00389">
    <property type="entry name" value="HOX"/>
    <property type="match status" value="1"/>
</dbReference>
<dbReference type="SUPFAM" id="SSF81995">
    <property type="entry name" value="beta-sandwich domain of Sec23/24"/>
    <property type="match status" value="1"/>
</dbReference>
<dbReference type="SUPFAM" id="SSF46689">
    <property type="entry name" value="Homeodomain-like"/>
    <property type="match status" value="1"/>
</dbReference>
<dbReference type="PROSITE" id="PS50071">
    <property type="entry name" value="HOMEOBOX_2"/>
    <property type="match status" value="1"/>
</dbReference>
<evidence type="ECO:0000250" key="1"/>
<evidence type="ECO:0000255" key="2"/>
<evidence type="ECO:0000255" key="3">
    <source>
        <dbReference type="PROSITE-ProRule" id="PRU00108"/>
    </source>
</evidence>
<evidence type="ECO:0000256" key="4">
    <source>
        <dbReference type="SAM" id="MobiDB-lite"/>
    </source>
</evidence>
<proteinExistence type="inferred from homology"/>
<keyword id="KW-0175">Coiled coil</keyword>
<keyword id="KW-0217">Developmental protein</keyword>
<keyword id="KW-0238">DNA-binding</keyword>
<keyword id="KW-0371">Homeobox</keyword>
<keyword id="KW-0539">Nucleus</keyword>
<keyword id="KW-1185">Reference proteome</keyword>
<organism>
    <name type="scientific">Dictyostelium discoideum</name>
    <name type="common">Social amoeba</name>
    <dbReference type="NCBI Taxonomy" id="44689"/>
    <lineage>
        <taxon>Eukaryota</taxon>
        <taxon>Amoebozoa</taxon>
        <taxon>Evosea</taxon>
        <taxon>Eumycetozoa</taxon>
        <taxon>Dictyostelia</taxon>
        <taxon>Dictyosteliales</taxon>
        <taxon>Dictyosteliaceae</taxon>
        <taxon>Dictyostelium</taxon>
    </lineage>
</organism>
<accession>Q54I65</accession>
<gene>
    <name type="primary">hbx13</name>
    <name type="ORF">DDB_G0288975</name>
</gene>
<sequence>MEYLKLCFYLFFFYFVMEQIQQQQQQQQQQQQQQQQQQQQQQQQQQQQLQQQQQQQQQQQQQQQQQQQQQQQNPKMNNQPNETRLPSPPLLNSTVPKNELNINHHHQHNYKINSAPLKASQHANEYDHNEESLNSSNNNNNNNFNNSRPTFSSCSGNSNNTTTTTTTTTTTNPINGSVNSNVTTTSINTIHQKFITQLKQRLGKGIDYNNYINKLKNINNINNISKLINLSSQPDAIGKNNNLISNTGPVAEMYDDEEFDEFDEEEDDDISAQKLVGILSRESSSSNLSSIAPSPLLQQPNCLPSPFINGTPLLSNHSNNNNNNNNNHHHHHHHHHQKRLSIGSMDSTNHLTPLPLLHKHTNNNNNINNNNNHNHNNILGSPNQLNRSQDFTSKNNNINNNNNNNNKIINEENCNKGSPNQNSSENNSEEENEYHGGEEGNVYSVYDLNSPYFNERKQRALSNNKSQQPPQHVPTPCTYNDCCICAYGPPPSFFTSAPTWADICYIALYCLTLSRPEVKYYHIKKDICTFIDCHYETICMRKRTSIWRQTVNMTLSHPQYFEMFQQESALENGRKGYYGLKQIHDPYEHTALNKRSRRKRRHEQKMIQEELKKNGFTNLLLNSPSIENNDQHHNGYIQSYNNNSNHNNNNNNNNNNNNNNSNNNNNNNNNNSNNNNNNNINNNNINNNNNNNILTSPIQHHPHSHQQQHHQQQLQHQQHQQQQLLHQQHQQLLHQQHQQQLQIQYQQQQTHNNNLNQTQQLYYNHHHHQQQQQQQQQQQQHNNNNNNNNSNHNSVLTSPPLSQFPKTPLQLSQTPQHSLSALSSPFLKTLTIEDEDDSYNGQVHKKLRSAKLTSVNSINSNSGMSLPMISSPSPNLSHMQKNRPNFDDILNSSLSSSNTTNSATTSSSNSILSNSLSNISNSSGGSGGVCISEDYESNIQRRKSLNNIVLNKTNKNILPKLDDECDDEDDFHFTENEREVPVSNLKSSSFIINKNNIINQQNYNENNNNNNNNNNNNYNINNINNNNNNNFDDADDENEFENKDNINNNNNNNNNNNNNNNNNKNDKNESEFESKEKLNSPFGSSIPNIVNNEQLSPYSQQSLSSSSSENPSPQWSTNGPSQTSSSKLSNSTSTLINNNNNSMSIMSINSSGNSINNTTTYNNNNNFINNNSNNNNNMEIDDDDEDGIDGIEGEDDSKKRMRKTTRPDEKIYLEIYYQHFYENNGKHSKDELITLSNNLNWKVNRIQRWLDNRRTKDKLKNLRVSQERTISFGASSTSSTQTSTNSPSSQLSPLVPNMNNNDQQSISTPSLILSQINNNQNNNQNNNNNNNTNNADVTLISNNNVPNTPIMANTQSNINSLLN</sequence>
<feature type="chain" id="PRO_0000388796" description="Homeobox protein 13">
    <location>
        <begin position="1"/>
        <end position="1363"/>
    </location>
</feature>
<feature type="DNA-binding region" description="Homeobox" evidence="3">
    <location>
        <begin position="1198"/>
        <end position="1261"/>
    </location>
</feature>
<feature type="region of interest" description="Disordered" evidence="4">
    <location>
        <begin position="66"/>
        <end position="96"/>
    </location>
</feature>
<feature type="region of interest" description="Disordered" evidence="4">
    <location>
        <begin position="120"/>
        <end position="177"/>
    </location>
</feature>
<feature type="region of interest" description="Disordered" evidence="4">
    <location>
        <begin position="308"/>
        <end position="437"/>
    </location>
</feature>
<feature type="region of interest" description="Disordered" evidence="4">
    <location>
        <begin position="621"/>
        <end position="731"/>
    </location>
</feature>
<feature type="region of interest" description="Disordered" evidence="4">
    <location>
        <begin position="765"/>
        <end position="818"/>
    </location>
</feature>
<feature type="region of interest" description="Disordered" evidence="4">
    <location>
        <begin position="857"/>
        <end position="911"/>
    </location>
</feature>
<feature type="region of interest" description="Disordered" evidence="4">
    <location>
        <begin position="1001"/>
        <end position="1137"/>
    </location>
</feature>
<feature type="region of interest" description="Disordered" evidence="4">
    <location>
        <begin position="1166"/>
        <end position="1202"/>
    </location>
</feature>
<feature type="region of interest" description="Disordered" evidence="4">
    <location>
        <begin position="1270"/>
        <end position="1341"/>
    </location>
</feature>
<feature type="coiled-coil region" evidence="2">
    <location>
        <begin position="15"/>
        <end position="73"/>
    </location>
</feature>
<feature type="coiled-coil region" evidence="2">
    <location>
        <begin position="738"/>
        <end position="789"/>
    </location>
</feature>
<feature type="compositionally biased region" description="Polar residues" evidence="4">
    <location>
        <begin position="73"/>
        <end position="96"/>
    </location>
</feature>
<feature type="compositionally biased region" description="Low complexity" evidence="4">
    <location>
        <begin position="132"/>
        <end position="147"/>
    </location>
</feature>
<feature type="compositionally biased region" description="Polar residues" evidence="4">
    <location>
        <begin position="148"/>
        <end position="158"/>
    </location>
</feature>
<feature type="compositionally biased region" description="Low complexity" evidence="4">
    <location>
        <begin position="159"/>
        <end position="177"/>
    </location>
</feature>
<feature type="compositionally biased region" description="Low complexity" evidence="4">
    <location>
        <begin position="315"/>
        <end position="326"/>
    </location>
</feature>
<feature type="compositionally biased region" description="Basic residues" evidence="4">
    <location>
        <begin position="327"/>
        <end position="339"/>
    </location>
</feature>
<feature type="compositionally biased region" description="Low complexity" evidence="4">
    <location>
        <begin position="348"/>
        <end position="378"/>
    </location>
</feature>
<feature type="compositionally biased region" description="Polar residues" evidence="4">
    <location>
        <begin position="379"/>
        <end position="393"/>
    </location>
</feature>
<feature type="compositionally biased region" description="Low complexity" evidence="4">
    <location>
        <begin position="394"/>
        <end position="408"/>
    </location>
</feature>
<feature type="compositionally biased region" description="Low complexity" evidence="4">
    <location>
        <begin position="415"/>
        <end position="426"/>
    </location>
</feature>
<feature type="compositionally biased region" description="Low complexity" evidence="4">
    <location>
        <begin position="641"/>
        <end position="693"/>
    </location>
</feature>
<feature type="compositionally biased region" description="Low complexity" evidence="4">
    <location>
        <begin position="709"/>
        <end position="731"/>
    </location>
</feature>
<feature type="compositionally biased region" description="Low complexity" evidence="4">
    <location>
        <begin position="770"/>
        <end position="793"/>
    </location>
</feature>
<feature type="compositionally biased region" description="Polar residues" evidence="4">
    <location>
        <begin position="794"/>
        <end position="818"/>
    </location>
</feature>
<feature type="compositionally biased region" description="Polar residues" evidence="4">
    <location>
        <begin position="857"/>
        <end position="883"/>
    </location>
</feature>
<feature type="compositionally biased region" description="Low complexity" evidence="4">
    <location>
        <begin position="889"/>
        <end position="911"/>
    </location>
</feature>
<feature type="compositionally biased region" description="Low complexity" evidence="4">
    <location>
        <begin position="1001"/>
        <end position="1031"/>
    </location>
</feature>
<feature type="compositionally biased region" description="Low complexity" evidence="4">
    <location>
        <begin position="1045"/>
        <end position="1063"/>
    </location>
</feature>
<feature type="compositionally biased region" description="Basic and acidic residues" evidence="4">
    <location>
        <begin position="1064"/>
        <end position="1078"/>
    </location>
</feature>
<feature type="compositionally biased region" description="Polar residues" evidence="4">
    <location>
        <begin position="1081"/>
        <end position="1095"/>
    </location>
</feature>
<feature type="compositionally biased region" description="Low complexity" evidence="4">
    <location>
        <begin position="1096"/>
        <end position="1116"/>
    </location>
</feature>
<feature type="compositionally biased region" description="Low complexity" evidence="4">
    <location>
        <begin position="1123"/>
        <end position="1137"/>
    </location>
</feature>
<feature type="compositionally biased region" description="Low complexity" evidence="4">
    <location>
        <begin position="1166"/>
        <end position="1177"/>
    </location>
</feature>
<feature type="compositionally biased region" description="Acidic residues" evidence="4">
    <location>
        <begin position="1179"/>
        <end position="1195"/>
    </location>
</feature>
<feature type="compositionally biased region" description="Low complexity" evidence="4">
    <location>
        <begin position="1275"/>
        <end position="1294"/>
    </location>
</feature>
<feature type="compositionally biased region" description="Polar residues" evidence="4">
    <location>
        <begin position="1297"/>
        <end position="1316"/>
    </location>
</feature>
<feature type="compositionally biased region" description="Low complexity" evidence="4">
    <location>
        <begin position="1317"/>
        <end position="1334"/>
    </location>
</feature>
<name>HBX13_DICDI</name>
<protein>
    <recommendedName>
        <fullName>Homeobox protein 13</fullName>
        <shortName>DdHbx-13</shortName>
    </recommendedName>
</protein>
<comment type="function">
    <text evidence="1">Putative transcription factor.</text>
</comment>
<comment type="subcellular location">
    <subcellularLocation>
        <location evidence="3">Nucleus</location>
    </subcellularLocation>
</comment>